<comment type="function">
    <text evidence="1">Catalyzes the NADPH-dependent rearrangement and reduction of 1-deoxy-D-xylulose-5-phosphate (DXP) to 2-C-methyl-D-erythritol 4-phosphate (MEP).</text>
</comment>
<comment type="catalytic activity">
    <reaction evidence="1">
        <text>2-C-methyl-D-erythritol 4-phosphate + NADP(+) = 1-deoxy-D-xylulose 5-phosphate + NADPH + H(+)</text>
        <dbReference type="Rhea" id="RHEA:13717"/>
        <dbReference type="ChEBI" id="CHEBI:15378"/>
        <dbReference type="ChEBI" id="CHEBI:57783"/>
        <dbReference type="ChEBI" id="CHEBI:57792"/>
        <dbReference type="ChEBI" id="CHEBI:58262"/>
        <dbReference type="ChEBI" id="CHEBI:58349"/>
        <dbReference type="EC" id="1.1.1.267"/>
    </reaction>
    <physiologicalReaction direction="right-to-left" evidence="1">
        <dbReference type="Rhea" id="RHEA:13719"/>
    </physiologicalReaction>
</comment>
<comment type="cofactor">
    <cofactor evidence="1">
        <name>Mg(2+)</name>
        <dbReference type="ChEBI" id="CHEBI:18420"/>
    </cofactor>
    <cofactor evidence="1">
        <name>Mn(2+)</name>
        <dbReference type="ChEBI" id="CHEBI:29035"/>
    </cofactor>
</comment>
<comment type="pathway">
    <text evidence="1">Isoprenoid biosynthesis; isopentenyl diphosphate biosynthesis via DXP pathway; isopentenyl diphosphate from 1-deoxy-D-xylulose 5-phosphate: step 1/6.</text>
</comment>
<comment type="similarity">
    <text evidence="1">Belongs to the DXR family.</text>
</comment>
<name>DXR_BURMS</name>
<keyword id="KW-0414">Isoprene biosynthesis</keyword>
<keyword id="KW-0464">Manganese</keyword>
<keyword id="KW-0479">Metal-binding</keyword>
<keyword id="KW-0521">NADP</keyword>
<keyword id="KW-0560">Oxidoreductase</keyword>
<feature type="chain" id="PRO_1000020228" description="1-deoxy-D-xylulose 5-phosphate reductoisomerase">
    <location>
        <begin position="1"/>
        <end position="398"/>
    </location>
</feature>
<feature type="binding site" evidence="1">
    <location>
        <position position="11"/>
    </location>
    <ligand>
        <name>NADPH</name>
        <dbReference type="ChEBI" id="CHEBI:57783"/>
    </ligand>
</feature>
<feature type="binding site" evidence="1">
    <location>
        <position position="12"/>
    </location>
    <ligand>
        <name>NADPH</name>
        <dbReference type="ChEBI" id="CHEBI:57783"/>
    </ligand>
</feature>
<feature type="binding site" evidence="1">
    <location>
        <position position="13"/>
    </location>
    <ligand>
        <name>NADPH</name>
        <dbReference type="ChEBI" id="CHEBI:57783"/>
    </ligand>
</feature>
<feature type="binding site" evidence="1">
    <location>
        <position position="14"/>
    </location>
    <ligand>
        <name>NADPH</name>
        <dbReference type="ChEBI" id="CHEBI:57783"/>
    </ligand>
</feature>
<feature type="binding site" evidence="1">
    <location>
        <position position="38"/>
    </location>
    <ligand>
        <name>NADPH</name>
        <dbReference type="ChEBI" id="CHEBI:57783"/>
    </ligand>
</feature>
<feature type="binding site" evidence="1">
    <location>
        <position position="39"/>
    </location>
    <ligand>
        <name>NADPH</name>
        <dbReference type="ChEBI" id="CHEBI:57783"/>
    </ligand>
</feature>
<feature type="binding site" evidence="1">
    <location>
        <position position="125"/>
    </location>
    <ligand>
        <name>NADPH</name>
        <dbReference type="ChEBI" id="CHEBI:57783"/>
    </ligand>
</feature>
<feature type="binding site" evidence="1">
    <location>
        <position position="126"/>
    </location>
    <ligand>
        <name>1-deoxy-D-xylulose 5-phosphate</name>
        <dbReference type="ChEBI" id="CHEBI:57792"/>
    </ligand>
</feature>
<feature type="binding site" evidence="1">
    <location>
        <position position="127"/>
    </location>
    <ligand>
        <name>NADPH</name>
        <dbReference type="ChEBI" id="CHEBI:57783"/>
    </ligand>
</feature>
<feature type="binding site" evidence="1">
    <location>
        <position position="151"/>
    </location>
    <ligand>
        <name>Mn(2+)</name>
        <dbReference type="ChEBI" id="CHEBI:29035"/>
    </ligand>
</feature>
<feature type="binding site" evidence="1">
    <location>
        <position position="152"/>
    </location>
    <ligand>
        <name>1-deoxy-D-xylulose 5-phosphate</name>
        <dbReference type="ChEBI" id="CHEBI:57792"/>
    </ligand>
</feature>
<feature type="binding site" evidence="1">
    <location>
        <position position="153"/>
    </location>
    <ligand>
        <name>1-deoxy-D-xylulose 5-phosphate</name>
        <dbReference type="ChEBI" id="CHEBI:57792"/>
    </ligand>
</feature>
<feature type="binding site" evidence="1">
    <location>
        <position position="153"/>
    </location>
    <ligand>
        <name>Mn(2+)</name>
        <dbReference type="ChEBI" id="CHEBI:29035"/>
    </ligand>
</feature>
<feature type="binding site" evidence="1">
    <location>
        <position position="179"/>
    </location>
    <ligand>
        <name>1-deoxy-D-xylulose 5-phosphate</name>
        <dbReference type="ChEBI" id="CHEBI:57792"/>
    </ligand>
</feature>
<feature type="binding site" evidence="1">
    <location>
        <position position="202"/>
    </location>
    <ligand>
        <name>1-deoxy-D-xylulose 5-phosphate</name>
        <dbReference type="ChEBI" id="CHEBI:57792"/>
    </ligand>
</feature>
<feature type="binding site" evidence="1">
    <location>
        <position position="208"/>
    </location>
    <ligand>
        <name>NADPH</name>
        <dbReference type="ChEBI" id="CHEBI:57783"/>
    </ligand>
</feature>
<feature type="binding site" evidence="1">
    <location>
        <position position="215"/>
    </location>
    <ligand>
        <name>1-deoxy-D-xylulose 5-phosphate</name>
        <dbReference type="ChEBI" id="CHEBI:57792"/>
    </ligand>
</feature>
<feature type="binding site" evidence="1">
    <location>
        <position position="220"/>
    </location>
    <ligand>
        <name>1-deoxy-D-xylulose 5-phosphate</name>
        <dbReference type="ChEBI" id="CHEBI:57792"/>
    </ligand>
</feature>
<feature type="binding site" evidence="1">
    <location>
        <position position="221"/>
    </location>
    <ligand>
        <name>1-deoxy-D-xylulose 5-phosphate</name>
        <dbReference type="ChEBI" id="CHEBI:57792"/>
    </ligand>
</feature>
<feature type="binding site" evidence="1">
    <location>
        <position position="224"/>
    </location>
    <ligand>
        <name>1-deoxy-D-xylulose 5-phosphate</name>
        <dbReference type="ChEBI" id="CHEBI:57792"/>
    </ligand>
</feature>
<feature type="binding site" evidence="1">
    <location>
        <position position="224"/>
    </location>
    <ligand>
        <name>Mn(2+)</name>
        <dbReference type="ChEBI" id="CHEBI:29035"/>
    </ligand>
</feature>
<reference key="1">
    <citation type="journal article" date="2010" name="Genome Biol. Evol.">
        <title>Continuing evolution of Burkholderia mallei through genome reduction and large-scale rearrangements.</title>
        <authorList>
            <person name="Losada L."/>
            <person name="Ronning C.M."/>
            <person name="DeShazer D."/>
            <person name="Woods D."/>
            <person name="Fedorova N."/>
            <person name="Kim H.S."/>
            <person name="Shabalina S.A."/>
            <person name="Pearson T.R."/>
            <person name="Brinkac L."/>
            <person name="Tan P."/>
            <person name="Nandi T."/>
            <person name="Crabtree J."/>
            <person name="Badger J."/>
            <person name="Beckstrom-Sternberg S."/>
            <person name="Saqib M."/>
            <person name="Schutzer S.E."/>
            <person name="Keim P."/>
            <person name="Nierman W.C."/>
        </authorList>
    </citation>
    <scope>NUCLEOTIDE SEQUENCE [LARGE SCALE GENOMIC DNA]</scope>
    <source>
        <strain>SAVP1</strain>
    </source>
</reference>
<proteinExistence type="inferred from homology"/>
<gene>
    <name evidence="1" type="primary">dxr</name>
    <name type="ordered locus">BMASAVP1_A2050</name>
</gene>
<accession>A1V563</accession>
<protein>
    <recommendedName>
        <fullName evidence="1">1-deoxy-D-xylulose 5-phosphate reductoisomerase</fullName>
        <shortName evidence="1">DXP reductoisomerase</shortName>
        <ecNumber evidence="1">1.1.1.267</ecNumber>
    </recommendedName>
    <alternativeName>
        <fullName evidence="1">1-deoxyxylulose-5-phosphate reductoisomerase</fullName>
    </alternativeName>
    <alternativeName>
        <fullName evidence="1">2-C-methyl-D-erythritol 4-phosphate synthase</fullName>
    </alternativeName>
</protein>
<evidence type="ECO:0000255" key="1">
    <source>
        <dbReference type="HAMAP-Rule" id="MF_00183"/>
    </source>
</evidence>
<dbReference type="EC" id="1.1.1.267" evidence="1"/>
<dbReference type="EMBL" id="CP000526">
    <property type="protein sequence ID" value="ABM51623.1"/>
    <property type="molecule type" value="Genomic_DNA"/>
</dbReference>
<dbReference type="RefSeq" id="WP_004193915.1">
    <property type="nucleotide sequence ID" value="NC_008785.1"/>
</dbReference>
<dbReference type="SMR" id="A1V563"/>
<dbReference type="KEGG" id="bmv:BMASAVP1_A2050"/>
<dbReference type="HOGENOM" id="CLU_035714_4_0_4"/>
<dbReference type="UniPathway" id="UPA00056">
    <property type="reaction ID" value="UER00092"/>
</dbReference>
<dbReference type="GO" id="GO:0030604">
    <property type="term" value="F:1-deoxy-D-xylulose-5-phosphate reductoisomerase activity"/>
    <property type="evidence" value="ECO:0007669"/>
    <property type="project" value="UniProtKB-UniRule"/>
</dbReference>
<dbReference type="GO" id="GO:0030145">
    <property type="term" value="F:manganese ion binding"/>
    <property type="evidence" value="ECO:0007669"/>
    <property type="project" value="TreeGrafter"/>
</dbReference>
<dbReference type="GO" id="GO:0070402">
    <property type="term" value="F:NADPH binding"/>
    <property type="evidence" value="ECO:0007669"/>
    <property type="project" value="InterPro"/>
</dbReference>
<dbReference type="GO" id="GO:0051484">
    <property type="term" value="P:isopentenyl diphosphate biosynthetic process, methylerythritol 4-phosphate pathway involved in terpenoid biosynthetic process"/>
    <property type="evidence" value="ECO:0007669"/>
    <property type="project" value="TreeGrafter"/>
</dbReference>
<dbReference type="FunFam" id="1.10.1740.10:FF:000004">
    <property type="entry name" value="1-deoxy-D-xylulose 5-phosphate reductoisomerase"/>
    <property type="match status" value="1"/>
</dbReference>
<dbReference type="FunFam" id="3.40.50.720:FF:000045">
    <property type="entry name" value="1-deoxy-D-xylulose 5-phosphate reductoisomerase"/>
    <property type="match status" value="1"/>
</dbReference>
<dbReference type="Gene3D" id="1.10.1740.10">
    <property type="match status" value="1"/>
</dbReference>
<dbReference type="Gene3D" id="3.40.50.720">
    <property type="entry name" value="NAD(P)-binding Rossmann-like Domain"/>
    <property type="match status" value="1"/>
</dbReference>
<dbReference type="HAMAP" id="MF_00183">
    <property type="entry name" value="DXP_reductoisom"/>
    <property type="match status" value="1"/>
</dbReference>
<dbReference type="InterPro" id="IPR003821">
    <property type="entry name" value="DXP_reductoisomerase"/>
</dbReference>
<dbReference type="InterPro" id="IPR013644">
    <property type="entry name" value="DXP_reductoisomerase_C"/>
</dbReference>
<dbReference type="InterPro" id="IPR013512">
    <property type="entry name" value="DXP_reductoisomerase_N"/>
</dbReference>
<dbReference type="InterPro" id="IPR026877">
    <property type="entry name" value="DXPR_C"/>
</dbReference>
<dbReference type="InterPro" id="IPR036169">
    <property type="entry name" value="DXPR_C_sf"/>
</dbReference>
<dbReference type="InterPro" id="IPR036291">
    <property type="entry name" value="NAD(P)-bd_dom_sf"/>
</dbReference>
<dbReference type="NCBIfam" id="TIGR00243">
    <property type="entry name" value="Dxr"/>
    <property type="match status" value="1"/>
</dbReference>
<dbReference type="NCBIfam" id="NF003938">
    <property type="entry name" value="PRK05447.1-1"/>
    <property type="match status" value="1"/>
</dbReference>
<dbReference type="NCBIfam" id="NF009114">
    <property type="entry name" value="PRK12464.1"/>
    <property type="match status" value="1"/>
</dbReference>
<dbReference type="PANTHER" id="PTHR30525">
    <property type="entry name" value="1-DEOXY-D-XYLULOSE 5-PHOSPHATE REDUCTOISOMERASE"/>
    <property type="match status" value="1"/>
</dbReference>
<dbReference type="PANTHER" id="PTHR30525:SF0">
    <property type="entry name" value="1-DEOXY-D-XYLULOSE 5-PHOSPHATE REDUCTOISOMERASE, CHLOROPLASTIC"/>
    <property type="match status" value="1"/>
</dbReference>
<dbReference type="Pfam" id="PF08436">
    <property type="entry name" value="DXP_redisom_C"/>
    <property type="match status" value="1"/>
</dbReference>
<dbReference type="Pfam" id="PF02670">
    <property type="entry name" value="DXP_reductoisom"/>
    <property type="match status" value="1"/>
</dbReference>
<dbReference type="Pfam" id="PF13288">
    <property type="entry name" value="DXPR_C"/>
    <property type="match status" value="1"/>
</dbReference>
<dbReference type="PIRSF" id="PIRSF006205">
    <property type="entry name" value="Dxp_reductismrs"/>
    <property type="match status" value="1"/>
</dbReference>
<dbReference type="SUPFAM" id="SSF69055">
    <property type="entry name" value="1-deoxy-D-xylulose-5-phosphate reductoisomerase, C-terminal domain"/>
    <property type="match status" value="1"/>
</dbReference>
<dbReference type="SUPFAM" id="SSF55347">
    <property type="entry name" value="Glyceraldehyde-3-phosphate dehydrogenase-like, C-terminal domain"/>
    <property type="match status" value="1"/>
</dbReference>
<dbReference type="SUPFAM" id="SSF51735">
    <property type="entry name" value="NAD(P)-binding Rossmann-fold domains"/>
    <property type="match status" value="1"/>
</dbReference>
<organism>
    <name type="scientific">Burkholderia mallei (strain SAVP1)</name>
    <dbReference type="NCBI Taxonomy" id="320388"/>
    <lineage>
        <taxon>Bacteria</taxon>
        <taxon>Pseudomonadati</taxon>
        <taxon>Pseudomonadota</taxon>
        <taxon>Betaproteobacteria</taxon>
        <taxon>Burkholderiales</taxon>
        <taxon>Burkholderiaceae</taxon>
        <taxon>Burkholderia</taxon>
        <taxon>pseudomallei group</taxon>
    </lineage>
</organism>
<sequence length="398" mass="41622">MQKRLTLLGSTGSIGDSTLDVVARHPERFAVHALTAHRNGEKLVAQCLRFAPDVAVVGDAETAARVEAQLRAAGSRTQVAYGKQALVDVSKSDGCDTVVAAIVGAAGLAPSLAAARAGKRILLANKEALVMSGAIFMDAVRDHGAILLPVDSEHNAIFQCMPRDAAEHGGIAKIIVTASGGPFRTREPATLASVTPDEACKHPNWVMGRKISVDSATMMNKGLEVIEAHWLFGLPSEHIDVLIHPQSVIHSLVSYRDGSVLAQLGNPDMRTPIAHALAFPERVDAGVAQLDLAQIATLTFEKPDYARFPCLALAIDALEAGGVASAALNAANEIAVDAFLSRRIRFTAIAQTVGAVLDGLSNRTPGGLDDVIEADAAARRAATAFIGKLPAPGVERAA</sequence>